<comment type="function">
    <text evidence="1">Exhibits ester hydrolase activity on the substrate p-nitrophenyl acetate, in vitro. Regulates DNA damage and repair by regulating HIF1A degradation via chaperone-mediated autophagy (CMA).</text>
</comment>
<comment type="cofactor">
    <cofactor evidence="1">
        <name>Zn(2+)</name>
        <dbReference type="ChEBI" id="CHEBI:29105"/>
    </cofactor>
</comment>
<comment type="subunit">
    <text evidence="1">Monomer.</text>
</comment>
<comment type="subcellular location">
    <subcellularLocation>
        <location evidence="1">Nucleus</location>
    </subcellularLocation>
    <subcellularLocation>
        <location evidence="1">Cytoplasm</location>
    </subcellularLocation>
    <text evidence="1">Mainly located in the cytoplasm.</text>
</comment>
<sequence length="315" mass="34993">MACTEFSFHVPSLEELAEVLQKGLKDNFAHVQVSVVDCPDLTKEPFTFPVKGICGQTRIAEVGGVPYLLPLVNKKKVYDLNEIAKEIKLPGAFILGAGAGPFQTLGFNSEFMPIVQTASEHHQPVNGSYFARANPADGKCLLEKYSQKYPDFGCALLANLFASEGQPGKVIEVQAKKRTGEHNFVSCMRQTLEKHYGDKPVGMGGTFLVQKGKVKAHIMPAEFSSCSLNSDEAVNQWLNFYEMKAPLVCLPVFVSKDPGLDLRLEHTHFFSHHGEGGHYHYDTTPDTVEYLGYFSPAQFLYRIDQPKETHAFGRD</sequence>
<organism>
    <name type="scientific">Rattus norvegicus</name>
    <name type="common">Rat</name>
    <dbReference type="NCBI Taxonomy" id="10116"/>
    <lineage>
        <taxon>Eukaryota</taxon>
        <taxon>Metazoa</taxon>
        <taxon>Chordata</taxon>
        <taxon>Craniata</taxon>
        <taxon>Vertebrata</taxon>
        <taxon>Euteleostomi</taxon>
        <taxon>Mammalia</taxon>
        <taxon>Eutheria</taxon>
        <taxon>Euarchontoglires</taxon>
        <taxon>Glires</taxon>
        <taxon>Rodentia</taxon>
        <taxon>Myomorpha</taxon>
        <taxon>Muroidea</taxon>
        <taxon>Muridae</taxon>
        <taxon>Murinae</taxon>
        <taxon>Rattus</taxon>
    </lineage>
</organism>
<feature type="chain" id="PRO_0000246031" description="Ester hydrolase C11orf54 homolog">
    <location>
        <begin position="1"/>
        <end position="315"/>
    </location>
</feature>
<feature type="binding site" evidence="1">
    <location>
        <position position="266"/>
    </location>
    <ligand>
        <name>Zn(2+)</name>
        <dbReference type="ChEBI" id="CHEBI:29105"/>
        <note>catalytic</note>
    </ligand>
</feature>
<feature type="binding site" evidence="1">
    <location>
        <position position="268"/>
    </location>
    <ligand>
        <name>Zn(2+)</name>
        <dbReference type="ChEBI" id="CHEBI:29105"/>
        <note>catalytic</note>
    </ligand>
</feature>
<feature type="binding site" evidence="1">
    <location>
        <position position="278"/>
    </location>
    <ligand>
        <name>Zn(2+)</name>
        <dbReference type="ChEBI" id="CHEBI:29105"/>
        <note>catalytic</note>
    </ligand>
</feature>
<name>CK054_RAT</name>
<keyword id="KW-0963">Cytoplasm</keyword>
<keyword id="KW-0903">Direct protein sequencing</keyword>
<keyword id="KW-0378">Hydrolase</keyword>
<keyword id="KW-0479">Metal-binding</keyword>
<keyword id="KW-0539">Nucleus</keyword>
<keyword id="KW-1185">Reference proteome</keyword>
<keyword id="KW-0862">Zinc</keyword>
<reference key="1">
    <citation type="journal article" date="2004" name="Genome Res.">
        <title>The status, quality, and expansion of the NIH full-length cDNA project: the Mammalian Gene Collection (MGC).</title>
        <authorList>
            <consortium name="The MGC Project Team"/>
        </authorList>
    </citation>
    <scope>NUCLEOTIDE SEQUENCE [LARGE SCALE MRNA]</scope>
    <source>
        <tissue>Kidney</tissue>
    </source>
</reference>
<reference key="2">
    <citation type="submission" date="2007-04" db="UniProtKB">
        <authorList>
            <person name="Lubec G."/>
            <person name="Afjehi-Sadat L."/>
            <person name="Chen W.-Q."/>
        </authorList>
    </citation>
    <scope>PROTEIN SEQUENCE OF 26-43; 149-169 AND 245-263</scope>
    <scope>IDENTIFICATION BY MASS SPECTROMETRY</scope>
    <source>
        <strain>Sprague-Dawley</strain>
        <tissue>Hippocampus</tissue>
        <tissue>Spinal cord</tissue>
    </source>
</reference>
<dbReference type="EC" id="3.1.-.-" evidence="1"/>
<dbReference type="EMBL" id="BC085915">
    <property type="protein sequence ID" value="AAH85915.1"/>
    <property type="molecule type" value="mRNA"/>
</dbReference>
<dbReference type="RefSeq" id="NP_001014228.1">
    <property type="nucleotide sequence ID" value="NM_001014206.1"/>
</dbReference>
<dbReference type="SMR" id="Q5U2Q3"/>
<dbReference type="FunCoup" id="Q5U2Q3">
    <property type="interactions" value="731"/>
</dbReference>
<dbReference type="STRING" id="10116.ENSRNOP00000014496"/>
<dbReference type="iPTMnet" id="Q5U2Q3"/>
<dbReference type="PhosphoSitePlus" id="Q5U2Q3"/>
<dbReference type="SwissPalm" id="Q5U2Q3"/>
<dbReference type="PaxDb" id="10116-ENSRNOP00000014496"/>
<dbReference type="GeneID" id="363016"/>
<dbReference type="KEGG" id="rno:363016"/>
<dbReference type="UCSC" id="RGD:1309534">
    <property type="organism name" value="rat"/>
</dbReference>
<dbReference type="AGR" id="RGD:1309534"/>
<dbReference type="CTD" id="363016"/>
<dbReference type="RGD" id="1309534">
    <property type="gene designation" value="C8h11orf54"/>
</dbReference>
<dbReference type="VEuPathDB" id="HostDB:ENSRNOG00000010887"/>
<dbReference type="eggNOG" id="KOG4048">
    <property type="taxonomic scope" value="Eukaryota"/>
</dbReference>
<dbReference type="HOGENOM" id="CLU_055541_0_0_1"/>
<dbReference type="InParanoid" id="Q5U2Q3"/>
<dbReference type="OrthoDB" id="5119241at2759"/>
<dbReference type="PhylomeDB" id="Q5U2Q3"/>
<dbReference type="TreeFam" id="TF313169"/>
<dbReference type="PRO" id="PR:Q5U2Q3"/>
<dbReference type="Proteomes" id="UP000002494">
    <property type="component" value="Chromosome 8"/>
</dbReference>
<dbReference type="Bgee" id="ENSRNOG00000010887">
    <property type="expression patterns" value="Expressed in adult mammalian kidney and 19 other cell types or tissues"/>
</dbReference>
<dbReference type="GO" id="GO:0005737">
    <property type="term" value="C:cytoplasm"/>
    <property type="evidence" value="ECO:0000250"/>
    <property type="project" value="UniProtKB"/>
</dbReference>
<dbReference type="GO" id="GO:0016604">
    <property type="term" value="C:nuclear body"/>
    <property type="evidence" value="ECO:0007669"/>
    <property type="project" value="Ensembl"/>
</dbReference>
<dbReference type="GO" id="GO:0005634">
    <property type="term" value="C:nucleus"/>
    <property type="evidence" value="ECO:0000318"/>
    <property type="project" value="GO_Central"/>
</dbReference>
<dbReference type="GO" id="GO:0016788">
    <property type="term" value="F:hydrolase activity, acting on ester bonds"/>
    <property type="evidence" value="ECO:0000250"/>
    <property type="project" value="UniProtKB"/>
</dbReference>
<dbReference type="GO" id="GO:0008270">
    <property type="term" value="F:zinc ion binding"/>
    <property type="evidence" value="ECO:0000250"/>
    <property type="project" value="UniProtKB"/>
</dbReference>
<dbReference type="GO" id="GO:0006974">
    <property type="term" value="P:DNA damage response"/>
    <property type="evidence" value="ECO:0000250"/>
    <property type="project" value="UniProtKB"/>
</dbReference>
<dbReference type="GO" id="GO:0006282">
    <property type="term" value="P:regulation of DNA repair"/>
    <property type="evidence" value="ECO:0000250"/>
    <property type="project" value="UniProtKB"/>
</dbReference>
<dbReference type="CDD" id="cd17298">
    <property type="entry name" value="DUF1907"/>
    <property type="match status" value="1"/>
</dbReference>
<dbReference type="InterPro" id="IPR015021">
    <property type="entry name" value="C11orf54_DUF1907"/>
</dbReference>
<dbReference type="PANTHER" id="PTHR13204:SF1">
    <property type="entry name" value="ESTER HYDROLASE C11ORF54"/>
    <property type="match status" value="1"/>
</dbReference>
<dbReference type="PANTHER" id="PTHR13204">
    <property type="entry name" value="PTD012 PROTEIN"/>
    <property type="match status" value="1"/>
</dbReference>
<dbReference type="Pfam" id="PF08925">
    <property type="entry name" value="DUF1907"/>
    <property type="match status" value="1"/>
</dbReference>
<dbReference type="SMART" id="SM01168">
    <property type="entry name" value="DUF1907"/>
    <property type="match status" value="1"/>
</dbReference>
<dbReference type="SUPFAM" id="SSF117856">
    <property type="entry name" value="AF0104/ALDC/Ptd012-like"/>
    <property type="match status" value="1"/>
</dbReference>
<proteinExistence type="evidence at protein level"/>
<evidence type="ECO:0000250" key="1">
    <source>
        <dbReference type="UniProtKB" id="Q9H0W9"/>
    </source>
</evidence>
<accession>Q5U2Q3</accession>
<protein>
    <recommendedName>
        <fullName>Ester hydrolase C11orf54 homolog</fullName>
        <ecNumber evidence="1">3.1.-.-</ecNumber>
    </recommendedName>
</protein>